<sequence length="494" mass="55170">MKKQAFSSEQYLNLQRDHILERINQFDGKLYLEFGGKMLEDFHAARVLPGYEPDNKIKLLQEFKDQVEVVIAINASNIEHSKARGDLGISYDQEVLRLIDKFNELNIYVGSVVITQYSGQPAADAFRNQLEKNGITSYIHYPIKGYPTDINHIISPEGMGKNDYIKTSRNLIVVTAPGPGSGKLATCLSNMYHDQINGIKSGYAKFETFPVWNLPLHHPVNLAYEAATADLDDVNMIDPFHLETYGKTTVNYNRDIEIFPVLKRMLERILGESPYASPTDMGVNMVGFAITDDEAAKEASKQEIIRRYYQTVLDFKNERVPETAVKKIELLMNDLGITPEDRQVVVAARAKAEETGGSALALELPNGQIVTGKNSELFGPTAAALINAIKTSAGIDKDTKLIEPEVVKPIQGLKIDHLGSRNPRLHSNEILIALAITAANNVDAARAMEELDNLKGSEAHSTIILTDEDKNVLRKLGINVTFDPYYQYDKLYRK</sequence>
<feature type="chain" id="PRO_1000069100" description="UPF0371 protein STER_1332">
    <location>
        <begin position="1"/>
        <end position="494"/>
    </location>
</feature>
<dbReference type="EMBL" id="CP000419">
    <property type="protein sequence ID" value="ABJ66507.1"/>
    <property type="molecule type" value="Genomic_DNA"/>
</dbReference>
<dbReference type="RefSeq" id="WP_002951328.1">
    <property type="nucleotide sequence ID" value="NC_008532.1"/>
</dbReference>
<dbReference type="SMR" id="Q03JW5"/>
<dbReference type="KEGG" id="ste:STER_1332"/>
<dbReference type="HOGENOM" id="CLU_046981_0_0_9"/>
<dbReference type="Gene3D" id="1.20.1570.10">
    <property type="entry name" value="dip2346 domain like"/>
    <property type="match status" value="1"/>
</dbReference>
<dbReference type="Gene3D" id="3.10.630.10">
    <property type="entry name" value="dip2346 domain like"/>
    <property type="match status" value="1"/>
</dbReference>
<dbReference type="Gene3D" id="3.40.140.40">
    <property type="entry name" value="Domain of unknown function (DUF1846), C-terminal subdomain"/>
    <property type="match status" value="1"/>
</dbReference>
<dbReference type="HAMAP" id="MF_01567">
    <property type="entry name" value="UPF0371"/>
    <property type="match status" value="1"/>
</dbReference>
<dbReference type="InterPro" id="IPR014999">
    <property type="entry name" value="DUF1846"/>
</dbReference>
<dbReference type="InterPro" id="IPR048441">
    <property type="entry name" value="DUF1846_C"/>
</dbReference>
<dbReference type="InterPro" id="IPR048496">
    <property type="entry name" value="DUF1846_N"/>
</dbReference>
<dbReference type="NCBIfam" id="NF010184">
    <property type="entry name" value="PRK13663.1"/>
    <property type="match status" value="1"/>
</dbReference>
<dbReference type="Pfam" id="PF08903">
    <property type="entry name" value="DUF1846"/>
    <property type="match status" value="1"/>
</dbReference>
<dbReference type="Pfam" id="PF20921">
    <property type="entry name" value="DUF1846_C"/>
    <property type="match status" value="1"/>
</dbReference>
<dbReference type="PIRSF" id="PIRSF033132">
    <property type="entry name" value="DUF1846"/>
    <property type="match status" value="1"/>
</dbReference>
<name>Y1332_STRTD</name>
<organism>
    <name type="scientific">Streptococcus thermophilus (strain ATCC BAA-491 / LMD-9)</name>
    <dbReference type="NCBI Taxonomy" id="322159"/>
    <lineage>
        <taxon>Bacteria</taxon>
        <taxon>Bacillati</taxon>
        <taxon>Bacillota</taxon>
        <taxon>Bacilli</taxon>
        <taxon>Lactobacillales</taxon>
        <taxon>Streptococcaceae</taxon>
        <taxon>Streptococcus</taxon>
    </lineage>
</organism>
<gene>
    <name type="ordered locus">STER_1332</name>
</gene>
<accession>Q03JW5</accession>
<comment type="similarity">
    <text evidence="1">Belongs to the UPF0371 family.</text>
</comment>
<reference key="1">
    <citation type="journal article" date="2006" name="Proc. Natl. Acad. Sci. U.S.A.">
        <title>Comparative genomics of the lactic acid bacteria.</title>
        <authorList>
            <person name="Makarova K.S."/>
            <person name="Slesarev A."/>
            <person name="Wolf Y.I."/>
            <person name="Sorokin A."/>
            <person name="Mirkin B."/>
            <person name="Koonin E.V."/>
            <person name="Pavlov A."/>
            <person name="Pavlova N."/>
            <person name="Karamychev V."/>
            <person name="Polouchine N."/>
            <person name="Shakhova V."/>
            <person name="Grigoriev I."/>
            <person name="Lou Y."/>
            <person name="Rohksar D."/>
            <person name="Lucas S."/>
            <person name="Huang K."/>
            <person name="Goodstein D.M."/>
            <person name="Hawkins T."/>
            <person name="Plengvidhya V."/>
            <person name="Welker D."/>
            <person name="Hughes J."/>
            <person name="Goh Y."/>
            <person name="Benson A."/>
            <person name="Baldwin K."/>
            <person name="Lee J.-H."/>
            <person name="Diaz-Muniz I."/>
            <person name="Dosti B."/>
            <person name="Smeianov V."/>
            <person name="Wechter W."/>
            <person name="Barabote R."/>
            <person name="Lorca G."/>
            <person name="Altermann E."/>
            <person name="Barrangou R."/>
            <person name="Ganesan B."/>
            <person name="Xie Y."/>
            <person name="Rawsthorne H."/>
            <person name="Tamir D."/>
            <person name="Parker C."/>
            <person name="Breidt F."/>
            <person name="Broadbent J.R."/>
            <person name="Hutkins R."/>
            <person name="O'Sullivan D."/>
            <person name="Steele J."/>
            <person name="Unlu G."/>
            <person name="Saier M.H. Jr."/>
            <person name="Klaenhammer T."/>
            <person name="Richardson P."/>
            <person name="Kozyavkin S."/>
            <person name="Weimer B.C."/>
            <person name="Mills D.A."/>
        </authorList>
    </citation>
    <scope>NUCLEOTIDE SEQUENCE [LARGE SCALE GENOMIC DNA]</scope>
    <source>
        <strain>ATCC BAA-491 / LMD-9</strain>
    </source>
</reference>
<evidence type="ECO:0000255" key="1">
    <source>
        <dbReference type="HAMAP-Rule" id="MF_01567"/>
    </source>
</evidence>
<protein>
    <recommendedName>
        <fullName evidence="1">UPF0371 protein STER_1332</fullName>
    </recommendedName>
</protein>
<proteinExistence type="inferred from homology"/>